<evidence type="ECO:0000255" key="1">
    <source>
        <dbReference type="HAMAP-Rule" id="MF_00151"/>
    </source>
</evidence>
<keyword id="KW-0067">ATP-binding</keyword>
<keyword id="KW-0173">Coenzyme A biosynthesis</keyword>
<keyword id="KW-0963">Cytoplasm</keyword>
<keyword id="KW-0460">Magnesium</keyword>
<keyword id="KW-0547">Nucleotide-binding</keyword>
<keyword id="KW-0548">Nucleotidyltransferase</keyword>
<keyword id="KW-1185">Reference proteome</keyword>
<keyword id="KW-0808">Transferase</keyword>
<gene>
    <name evidence="1" type="primary">coaD</name>
    <name type="ordered locus">Arth_2504</name>
</gene>
<comment type="function">
    <text evidence="1">Reversibly transfers an adenylyl group from ATP to 4'-phosphopantetheine, yielding dephospho-CoA (dPCoA) and pyrophosphate.</text>
</comment>
<comment type="catalytic activity">
    <reaction evidence="1">
        <text>(R)-4'-phosphopantetheine + ATP + H(+) = 3'-dephospho-CoA + diphosphate</text>
        <dbReference type="Rhea" id="RHEA:19801"/>
        <dbReference type="ChEBI" id="CHEBI:15378"/>
        <dbReference type="ChEBI" id="CHEBI:30616"/>
        <dbReference type="ChEBI" id="CHEBI:33019"/>
        <dbReference type="ChEBI" id="CHEBI:57328"/>
        <dbReference type="ChEBI" id="CHEBI:61723"/>
        <dbReference type="EC" id="2.7.7.3"/>
    </reaction>
</comment>
<comment type="cofactor">
    <cofactor evidence="1">
        <name>Mg(2+)</name>
        <dbReference type="ChEBI" id="CHEBI:18420"/>
    </cofactor>
</comment>
<comment type="pathway">
    <text evidence="1">Cofactor biosynthesis; coenzyme A biosynthesis; CoA from (R)-pantothenate: step 4/5.</text>
</comment>
<comment type="subunit">
    <text evidence="1">Homohexamer.</text>
</comment>
<comment type="subcellular location">
    <subcellularLocation>
        <location evidence="1">Cytoplasm</location>
    </subcellularLocation>
</comment>
<comment type="similarity">
    <text evidence="1">Belongs to the bacterial CoaD family.</text>
</comment>
<name>COAD_ARTS2</name>
<organism>
    <name type="scientific">Arthrobacter sp. (strain FB24)</name>
    <dbReference type="NCBI Taxonomy" id="290399"/>
    <lineage>
        <taxon>Bacteria</taxon>
        <taxon>Bacillati</taxon>
        <taxon>Actinomycetota</taxon>
        <taxon>Actinomycetes</taxon>
        <taxon>Micrococcales</taxon>
        <taxon>Micrococcaceae</taxon>
        <taxon>Arthrobacter</taxon>
    </lineage>
</organism>
<feature type="chain" id="PRO_1000011090" description="Phosphopantetheine adenylyltransferase">
    <location>
        <begin position="1"/>
        <end position="159"/>
    </location>
</feature>
<feature type="binding site" evidence="1">
    <location>
        <begin position="9"/>
        <end position="10"/>
    </location>
    <ligand>
        <name>ATP</name>
        <dbReference type="ChEBI" id="CHEBI:30616"/>
    </ligand>
</feature>
<feature type="binding site" evidence="1">
    <location>
        <position position="9"/>
    </location>
    <ligand>
        <name>substrate</name>
    </ligand>
</feature>
<feature type="binding site" evidence="1">
    <location>
        <position position="17"/>
    </location>
    <ligand>
        <name>ATP</name>
        <dbReference type="ChEBI" id="CHEBI:30616"/>
    </ligand>
</feature>
<feature type="binding site" evidence="1">
    <location>
        <position position="41"/>
    </location>
    <ligand>
        <name>substrate</name>
    </ligand>
</feature>
<feature type="binding site" evidence="1">
    <location>
        <position position="74"/>
    </location>
    <ligand>
        <name>substrate</name>
    </ligand>
</feature>
<feature type="binding site" evidence="1">
    <location>
        <position position="88"/>
    </location>
    <ligand>
        <name>substrate</name>
    </ligand>
</feature>
<feature type="binding site" evidence="1">
    <location>
        <begin position="89"/>
        <end position="91"/>
    </location>
    <ligand>
        <name>ATP</name>
        <dbReference type="ChEBI" id="CHEBI:30616"/>
    </ligand>
</feature>
<feature type="binding site" evidence="1">
    <location>
        <position position="99"/>
    </location>
    <ligand>
        <name>ATP</name>
        <dbReference type="ChEBI" id="CHEBI:30616"/>
    </ligand>
</feature>
<feature type="binding site" evidence="1">
    <location>
        <begin position="123"/>
        <end position="129"/>
    </location>
    <ligand>
        <name>ATP</name>
        <dbReference type="ChEBI" id="CHEBI:30616"/>
    </ligand>
</feature>
<feature type="site" description="Transition state stabilizer" evidence="1">
    <location>
        <position position="17"/>
    </location>
</feature>
<sequence length="159" mass="17529">MRRAVCPGSFDPIHNGHLEVIARAAGLFDEVIVAVSTNYAKKYRFPLEERIDMARETLASLRGIVVEPVGEGLLAEYCRQRGVSAIVKGLRSSSDFDYELPMATMNRQLSGVETVFLPTEGHYLHLSSTLIKEVFTLGGNVSDYVPRSVLKRLLAGESS</sequence>
<accession>A0JXW3</accession>
<reference key="1">
    <citation type="journal article" date="2013" name="Stand. Genomic Sci.">
        <title>Complete genome sequence of Arthrobacter sp. strain FB24.</title>
        <authorList>
            <person name="Nakatsu C.H."/>
            <person name="Barabote R."/>
            <person name="Thompson S."/>
            <person name="Bruce D."/>
            <person name="Detter C."/>
            <person name="Brettin T."/>
            <person name="Han C."/>
            <person name="Beasley F."/>
            <person name="Chen W."/>
            <person name="Konopka A."/>
            <person name="Xie G."/>
        </authorList>
    </citation>
    <scope>NUCLEOTIDE SEQUENCE [LARGE SCALE GENOMIC DNA]</scope>
    <source>
        <strain>FB24</strain>
    </source>
</reference>
<protein>
    <recommendedName>
        <fullName evidence="1">Phosphopantetheine adenylyltransferase</fullName>
        <ecNumber evidence="1">2.7.7.3</ecNumber>
    </recommendedName>
    <alternativeName>
        <fullName evidence="1">Dephospho-CoA pyrophosphorylase</fullName>
    </alternativeName>
    <alternativeName>
        <fullName evidence="1">Pantetheine-phosphate adenylyltransferase</fullName>
        <shortName evidence="1">PPAT</shortName>
    </alternativeName>
</protein>
<dbReference type="EC" id="2.7.7.3" evidence="1"/>
<dbReference type="EMBL" id="CP000454">
    <property type="protein sequence ID" value="ABK03883.1"/>
    <property type="molecule type" value="Genomic_DNA"/>
</dbReference>
<dbReference type="RefSeq" id="WP_011692345.1">
    <property type="nucleotide sequence ID" value="NC_008541.1"/>
</dbReference>
<dbReference type="SMR" id="A0JXW3"/>
<dbReference type="STRING" id="290399.Arth_2504"/>
<dbReference type="KEGG" id="art:Arth_2504"/>
<dbReference type="eggNOG" id="COG0669">
    <property type="taxonomic scope" value="Bacteria"/>
</dbReference>
<dbReference type="HOGENOM" id="CLU_100149_1_0_11"/>
<dbReference type="OrthoDB" id="9806661at2"/>
<dbReference type="UniPathway" id="UPA00241">
    <property type="reaction ID" value="UER00355"/>
</dbReference>
<dbReference type="Proteomes" id="UP000000754">
    <property type="component" value="Chromosome"/>
</dbReference>
<dbReference type="GO" id="GO:0005737">
    <property type="term" value="C:cytoplasm"/>
    <property type="evidence" value="ECO:0007669"/>
    <property type="project" value="UniProtKB-SubCell"/>
</dbReference>
<dbReference type="GO" id="GO:0005524">
    <property type="term" value="F:ATP binding"/>
    <property type="evidence" value="ECO:0007669"/>
    <property type="project" value="UniProtKB-KW"/>
</dbReference>
<dbReference type="GO" id="GO:0004595">
    <property type="term" value="F:pantetheine-phosphate adenylyltransferase activity"/>
    <property type="evidence" value="ECO:0007669"/>
    <property type="project" value="UniProtKB-UniRule"/>
</dbReference>
<dbReference type="GO" id="GO:0015937">
    <property type="term" value="P:coenzyme A biosynthetic process"/>
    <property type="evidence" value="ECO:0007669"/>
    <property type="project" value="UniProtKB-UniRule"/>
</dbReference>
<dbReference type="CDD" id="cd02163">
    <property type="entry name" value="PPAT"/>
    <property type="match status" value="1"/>
</dbReference>
<dbReference type="Gene3D" id="3.40.50.620">
    <property type="entry name" value="HUPs"/>
    <property type="match status" value="1"/>
</dbReference>
<dbReference type="HAMAP" id="MF_00151">
    <property type="entry name" value="PPAT_bact"/>
    <property type="match status" value="1"/>
</dbReference>
<dbReference type="InterPro" id="IPR004821">
    <property type="entry name" value="Cyt_trans-like"/>
</dbReference>
<dbReference type="InterPro" id="IPR001980">
    <property type="entry name" value="PPAT"/>
</dbReference>
<dbReference type="InterPro" id="IPR014729">
    <property type="entry name" value="Rossmann-like_a/b/a_fold"/>
</dbReference>
<dbReference type="NCBIfam" id="TIGR01510">
    <property type="entry name" value="coaD_prev_kdtB"/>
    <property type="match status" value="1"/>
</dbReference>
<dbReference type="NCBIfam" id="TIGR00125">
    <property type="entry name" value="cyt_tran_rel"/>
    <property type="match status" value="1"/>
</dbReference>
<dbReference type="PANTHER" id="PTHR21342">
    <property type="entry name" value="PHOSPHOPANTETHEINE ADENYLYLTRANSFERASE"/>
    <property type="match status" value="1"/>
</dbReference>
<dbReference type="PANTHER" id="PTHR21342:SF1">
    <property type="entry name" value="PHOSPHOPANTETHEINE ADENYLYLTRANSFERASE"/>
    <property type="match status" value="1"/>
</dbReference>
<dbReference type="Pfam" id="PF01467">
    <property type="entry name" value="CTP_transf_like"/>
    <property type="match status" value="1"/>
</dbReference>
<dbReference type="PRINTS" id="PR01020">
    <property type="entry name" value="LPSBIOSNTHSS"/>
</dbReference>
<dbReference type="SUPFAM" id="SSF52374">
    <property type="entry name" value="Nucleotidylyl transferase"/>
    <property type="match status" value="1"/>
</dbReference>
<proteinExistence type="inferred from homology"/>